<evidence type="ECO:0000255" key="1">
    <source>
        <dbReference type="HAMAP-Rule" id="MF_00530"/>
    </source>
</evidence>
<dbReference type="EMBL" id="DQ229107">
    <property type="protein sequence ID" value="ABA61928.1"/>
    <property type="molecule type" value="Genomic_DNA"/>
</dbReference>
<dbReference type="RefSeq" id="YP_635745.1">
    <property type="nucleotide sequence ID" value="NC_008097.1"/>
</dbReference>
<dbReference type="SMR" id="Q1ACK2"/>
<dbReference type="GeneID" id="4100215"/>
<dbReference type="GO" id="GO:0009535">
    <property type="term" value="C:chloroplast thylakoid membrane"/>
    <property type="evidence" value="ECO:0007669"/>
    <property type="project" value="UniProtKB-SubCell"/>
</dbReference>
<dbReference type="GO" id="GO:0045259">
    <property type="term" value="C:proton-transporting ATP synthase complex"/>
    <property type="evidence" value="ECO:0007669"/>
    <property type="project" value="UniProtKB-KW"/>
</dbReference>
<dbReference type="GO" id="GO:0005524">
    <property type="term" value="F:ATP binding"/>
    <property type="evidence" value="ECO:0007669"/>
    <property type="project" value="UniProtKB-UniRule"/>
</dbReference>
<dbReference type="GO" id="GO:0046933">
    <property type="term" value="F:proton-transporting ATP synthase activity, rotational mechanism"/>
    <property type="evidence" value="ECO:0007669"/>
    <property type="project" value="UniProtKB-UniRule"/>
</dbReference>
<dbReference type="CDD" id="cd12152">
    <property type="entry name" value="F1-ATPase_delta"/>
    <property type="match status" value="1"/>
</dbReference>
<dbReference type="FunFam" id="2.60.15.10:FF:000002">
    <property type="entry name" value="ATP synthase epsilon chain, chloroplastic"/>
    <property type="match status" value="1"/>
</dbReference>
<dbReference type="Gene3D" id="6.10.140.480">
    <property type="match status" value="1"/>
</dbReference>
<dbReference type="Gene3D" id="2.60.15.10">
    <property type="entry name" value="F0F1 ATP synthase delta/epsilon subunit, N-terminal"/>
    <property type="match status" value="1"/>
</dbReference>
<dbReference type="HAMAP" id="MF_00530">
    <property type="entry name" value="ATP_synth_epsil_bac"/>
    <property type="match status" value="1"/>
</dbReference>
<dbReference type="InterPro" id="IPR001469">
    <property type="entry name" value="ATP_synth_F1_dsu/esu"/>
</dbReference>
<dbReference type="InterPro" id="IPR020546">
    <property type="entry name" value="ATP_synth_F1_dsu/esu_N"/>
</dbReference>
<dbReference type="InterPro" id="IPR020547">
    <property type="entry name" value="ATP_synth_F1_esu_C"/>
</dbReference>
<dbReference type="InterPro" id="IPR036771">
    <property type="entry name" value="ATPsynth_dsu/esu_N"/>
</dbReference>
<dbReference type="NCBIfam" id="TIGR01216">
    <property type="entry name" value="ATP_synt_epsi"/>
    <property type="match status" value="1"/>
</dbReference>
<dbReference type="PANTHER" id="PTHR13822">
    <property type="entry name" value="ATP SYNTHASE DELTA/EPSILON CHAIN"/>
    <property type="match status" value="1"/>
</dbReference>
<dbReference type="PANTHER" id="PTHR13822:SF10">
    <property type="entry name" value="ATP SYNTHASE EPSILON CHAIN, CHLOROPLASTIC"/>
    <property type="match status" value="1"/>
</dbReference>
<dbReference type="Pfam" id="PF00401">
    <property type="entry name" value="ATP-synt_DE"/>
    <property type="match status" value="1"/>
</dbReference>
<dbReference type="Pfam" id="PF02823">
    <property type="entry name" value="ATP-synt_DE_N"/>
    <property type="match status" value="1"/>
</dbReference>
<dbReference type="SUPFAM" id="SSF51344">
    <property type="entry name" value="Epsilon subunit of F1F0-ATP synthase N-terminal domain"/>
    <property type="match status" value="1"/>
</dbReference>
<proteinExistence type="inferred from homology"/>
<keyword id="KW-0066">ATP synthesis</keyword>
<keyword id="KW-0139">CF(1)</keyword>
<keyword id="KW-0150">Chloroplast</keyword>
<keyword id="KW-0375">Hydrogen ion transport</keyword>
<keyword id="KW-0406">Ion transport</keyword>
<keyword id="KW-0472">Membrane</keyword>
<keyword id="KW-0934">Plastid</keyword>
<keyword id="KW-0793">Thylakoid</keyword>
<keyword id="KW-0813">Transport</keyword>
<feature type="chain" id="PRO_0000275192" description="ATP synthase epsilon chain, chloroplastic">
    <location>
        <begin position="1"/>
        <end position="133"/>
    </location>
</feature>
<comment type="function">
    <text evidence="1">Produces ATP from ADP in the presence of a proton gradient across the membrane.</text>
</comment>
<comment type="subunit">
    <text evidence="1">F-type ATPases have 2 components, CF(1) - the catalytic core - and CF(0) - the membrane proton channel. CF(1) has five subunits: alpha(3), beta(3), gamma(1), delta(1), epsilon(1). CF(0) has three main subunits: a, b and c.</text>
</comment>
<comment type="subcellular location">
    <subcellularLocation>
        <location evidence="1">Plastid</location>
        <location evidence="1">Chloroplast thylakoid membrane</location>
        <topology evidence="1">Peripheral membrane protein</topology>
    </subcellularLocation>
</comment>
<comment type="similarity">
    <text evidence="1">Belongs to the ATPase epsilon chain family.</text>
</comment>
<accession>Q1ACK2</accession>
<sequence length="133" mass="14821">MTLNLRIMAPNRIVWNSQTEQIILSTNSGQIGVLKDHTPLLTALDIGVIKIRIDSKWTTMALMGGFAMIDSNQVTILVNEAEEGNQIDLKNAQENFQLTQQSLLQAKSKKQIIEAKLAFKRAKARLEAISMIS</sequence>
<geneLocation type="chloroplast"/>
<gene>
    <name evidence="1" type="primary">atpE</name>
</gene>
<organism>
    <name type="scientific">Chara vulgaris</name>
    <name type="common">Common stonewort</name>
    <dbReference type="NCBI Taxonomy" id="55564"/>
    <lineage>
        <taxon>Eukaryota</taxon>
        <taxon>Viridiplantae</taxon>
        <taxon>Streptophyta</taxon>
        <taxon>Charophyceae</taxon>
        <taxon>Charales</taxon>
        <taxon>Characeae</taxon>
        <taxon>Chara</taxon>
    </lineage>
</organism>
<name>ATPE_CHAVU</name>
<reference key="1">
    <citation type="journal article" date="2006" name="Mol. Biol. Evol.">
        <title>The chloroplast genome sequence of Chara vulgaris sheds new light into the closest green algal relatives of land plants.</title>
        <authorList>
            <person name="Turmel M."/>
            <person name="Otis C."/>
            <person name="Lemieux C."/>
        </authorList>
    </citation>
    <scope>NUCLEOTIDE SEQUENCE [LARGE SCALE GENOMIC DNA]</scope>
</reference>
<protein>
    <recommendedName>
        <fullName evidence="1">ATP synthase epsilon chain, chloroplastic</fullName>
    </recommendedName>
    <alternativeName>
        <fullName evidence="1">ATP synthase F1 sector epsilon subunit</fullName>
    </alternativeName>
    <alternativeName>
        <fullName evidence="1">F-ATPase epsilon subunit</fullName>
    </alternativeName>
</protein>